<gene>
    <name type="primary">MLC1</name>
    <name type="ordered locus">YGL106W</name>
    <name type="ORF">G3080</name>
</gene>
<sequence>MSATRANKDIFTLFDKKGQGAIAKDSLGDYLRAIGYNPTNQLVQDIINADSSLRDASSLTLDQITGLIEVNEKELDATTKAKTEDFVKAFQVFDKESTGKVSVGDLRYMLTGLGEKLTDAEVDELLKGVEVDSNGEIDYKKFIEDVLRQ</sequence>
<accession>P53141</accession>
<accession>D6VU40</accession>
<evidence type="ECO:0000255" key="1">
    <source>
        <dbReference type="PROSITE-ProRule" id="PRU00448"/>
    </source>
</evidence>
<evidence type="ECO:0000269" key="2">
    <source>
    </source>
</evidence>
<evidence type="ECO:0000269" key="3">
    <source>
    </source>
</evidence>
<evidence type="ECO:0000269" key="4">
    <source>
    </source>
</evidence>
<evidence type="ECO:0000269" key="5">
    <source>
    </source>
</evidence>
<evidence type="ECO:0000269" key="6">
    <source>
    </source>
</evidence>
<evidence type="ECO:0000269" key="7">
    <source>
    </source>
</evidence>
<evidence type="ECO:0000269" key="8">
    <source>
    </source>
</evidence>
<evidence type="ECO:0000305" key="9"/>
<evidence type="ECO:0007744" key="10">
    <source>
    </source>
</evidence>
<evidence type="ECO:0007829" key="11">
    <source>
        <dbReference type="PDB" id="1M45"/>
    </source>
</evidence>
<evidence type="ECO:0007829" key="12">
    <source>
        <dbReference type="PDB" id="1N2D"/>
    </source>
</evidence>
<name>MLC1_YEAST</name>
<proteinExistence type="evidence at protein level"/>
<organism>
    <name type="scientific">Saccharomyces cerevisiae (strain ATCC 204508 / S288c)</name>
    <name type="common">Baker's yeast</name>
    <dbReference type="NCBI Taxonomy" id="559292"/>
    <lineage>
        <taxon>Eukaryota</taxon>
        <taxon>Fungi</taxon>
        <taxon>Dikarya</taxon>
        <taxon>Ascomycota</taxon>
        <taxon>Saccharomycotina</taxon>
        <taxon>Saccharomycetes</taxon>
        <taxon>Saccharomycetales</taxon>
        <taxon>Saccharomycetaceae</taxon>
        <taxon>Saccharomyces</taxon>
    </lineage>
</organism>
<protein>
    <recommendedName>
        <fullName>Myosin light chain 1</fullName>
    </recommendedName>
    <alternativeName>
        <fullName>Calmodulin-like myosin light chain MLC1</fullName>
    </alternativeName>
    <alternativeName>
        <fullName>Myosin-2 light chain</fullName>
    </alternativeName>
</protein>
<comment type="function">
    <text evidence="5 7 8">Essential light chain for the class II conventional myosin MYO1. Also acts as light chain for the class V unconventional myosin MYO2 and for IQG1. Involved in the assembly of the contractile actomyosin ring at the bud neck during cytokinesis by recruiting IQG1 to the bud neck. Also required for chitin and MYO2-dependent secretory vesicle deposition to the center of the bud neck for septum formation. May stabilize MYO2 by binding to its IQ domains. Its major function is probably not to regulate MYO1 activity, but rather to coordinate actin ring formation and targeted membrane deposition during cytokinesis via its interactions with MYO1, IQG1 and MYO2.</text>
</comment>
<comment type="subunit">
    <text evidence="2 3 4 5 6 7 8">Interacts with MYO1, MYO2 and IQG1 by binding to their IQ domains. Interacts with SEC4.</text>
</comment>
<comment type="interaction">
    <interactant intactId="EBI-10988">
        <id>P53141</id>
    </interactant>
    <interactant intactId="EBI-35351">
        <id>Q12280</id>
        <label>IQG1</label>
    </interactant>
    <organismsDiffer>false</organismsDiffer>
    <experiments>13</experiments>
</comment>
<comment type="interaction">
    <interactant intactId="EBI-10988">
        <id>P53141</id>
    </interactant>
    <interactant intactId="EBI-10988">
        <id>P53141</id>
        <label>MLC1</label>
    </interactant>
    <organismsDiffer>false</organismsDiffer>
    <experiments>2</experiments>
</comment>
<comment type="interaction">
    <interactant intactId="EBI-10988">
        <id>P53141</id>
    </interactant>
    <interactant intactId="EBI-11650">
        <id>P08964</id>
        <label>MYO1</label>
    </interactant>
    <organismsDiffer>false</organismsDiffer>
    <experiments>5</experiments>
</comment>
<comment type="interaction">
    <interactant intactId="EBI-10988">
        <id>P53141</id>
    </interactant>
    <interactant intactId="EBI-11659">
        <id>P19524</id>
        <label>MYO2</label>
    </interactant>
    <organismsDiffer>false</organismsDiffer>
    <experiments>4</experiments>
</comment>
<comment type="subcellular location">
    <subcellularLocation>
        <location evidence="2 3">Bud neck</location>
    </subcellularLocation>
    <subcellularLocation>
        <location evidence="2 3">Bud tip</location>
    </subcellularLocation>
    <text evidence="3">Concentrates to sites of polarized growth, namely to the incipient bud site in G1, to the bud tip during S and G2 phases of the cell cycle and to the bud neck during cytokinesis.</text>
</comment>
<feature type="chain" id="PRO_0000198765" description="Myosin light chain 1">
    <location>
        <begin position="1"/>
        <end position="149"/>
    </location>
</feature>
<feature type="domain" description="EF-hand 1" evidence="1">
    <location>
        <begin position="2"/>
        <end position="37"/>
    </location>
</feature>
<feature type="domain" description="EF-hand 2" evidence="1">
    <location>
        <begin position="81"/>
        <end position="116"/>
    </location>
</feature>
<feature type="domain" description="EF-hand 3" evidence="1">
    <location>
        <begin position="117"/>
        <end position="149"/>
    </location>
</feature>
<feature type="binding site" evidence="9">
    <location>
        <position position="15"/>
    </location>
    <ligand>
        <name>Ca(2+)</name>
        <dbReference type="ChEBI" id="CHEBI:29108"/>
        <label>1</label>
    </ligand>
</feature>
<feature type="binding site" evidence="9">
    <location>
        <position position="94"/>
    </location>
    <ligand>
        <name>Ca(2+)</name>
        <dbReference type="ChEBI" id="CHEBI:29108"/>
        <label>2</label>
    </ligand>
</feature>
<feature type="binding site" evidence="9">
    <location>
        <position position="98"/>
    </location>
    <ligand>
        <name>Ca(2+)</name>
        <dbReference type="ChEBI" id="CHEBI:29108"/>
        <label>2</label>
    </ligand>
</feature>
<feature type="binding site" evidence="9">
    <location>
        <position position="100"/>
    </location>
    <ligand>
        <name>Ca(2+)</name>
        <dbReference type="ChEBI" id="CHEBI:29108"/>
        <label>2</label>
    </ligand>
</feature>
<feature type="binding site" evidence="9">
    <location>
        <position position="105"/>
    </location>
    <ligand>
        <name>Ca(2+)</name>
        <dbReference type="ChEBI" id="CHEBI:29108"/>
        <label>2</label>
    </ligand>
</feature>
<feature type="binding site" evidence="9">
    <location>
        <position position="123"/>
    </location>
    <ligand>
        <name>Ca(2+)</name>
        <dbReference type="ChEBI" id="CHEBI:29108"/>
        <label>3</label>
    </ligand>
</feature>
<feature type="binding site" evidence="9">
    <location>
        <position position="127"/>
    </location>
    <ligand>
        <name>Ca(2+)</name>
        <dbReference type="ChEBI" id="CHEBI:29108"/>
        <label>3</label>
    </ligand>
</feature>
<feature type="binding site" evidence="9">
    <location>
        <position position="132"/>
    </location>
    <ligand>
        <name>Ca(2+)</name>
        <dbReference type="ChEBI" id="CHEBI:29108"/>
        <label>3</label>
    </ligand>
</feature>
<feature type="cross-link" description="Glycyl lysine isopeptide (Lys-Gly) (interchain with G-Cter in ubiquitin)" evidence="10">
    <location>
        <position position="116"/>
    </location>
</feature>
<feature type="mutagenesis site" description="In MLC1-1; causes a defect in septum formation." evidence="5">
    <original>F</original>
    <variation>A</variation>
    <location>
        <position position="93"/>
    </location>
</feature>
<feature type="mutagenesis site" description="In MLC1-11; abolishes interaction with MYO2 and IQG1 and reduces interaction with MYO1. Leads to mislocalization of IQG1 and a severe defect in cytokinesis." evidence="7">
    <original>G</original>
    <variation>D</variation>
    <location>
        <position position="114"/>
    </location>
</feature>
<feature type="mutagenesis site" description="In MLC1-93; reduces interaction with MYO1, but does not cause any defect in cytokinesis." evidence="7">
    <original>G</original>
    <variation>E</variation>
    <location>
        <position position="135"/>
    </location>
</feature>
<feature type="mutagenesis site" description="In MLC1-5; causes a defect in septum formation." evidence="5">
    <original>F</original>
    <variation>A</variation>
    <location>
        <position position="142"/>
    </location>
</feature>
<feature type="helix" evidence="11">
    <location>
        <begin position="11"/>
        <end position="14"/>
    </location>
</feature>
<feature type="strand" evidence="11">
    <location>
        <begin position="20"/>
        <end position="23"/>
    </location>
</feature>
<feature type="helix" evidence="11">
    <location>
        <begin position="24"/>
        <end position="26"/>
    </location>
</feature>
<feature type="helix" evidence="11">
    <location>
        <begin position="27"/>
        <end position="33"/>
    </location>
</feature>
<feature type="helix" evidence="11">
    <location>
        <begin position="40"/>
        <end position="48"/>
    </location>
</feature>
<feature type="helix" evidence="12">
    <location>
        <begin position="51"/>
        <end position="55"/>
    </location>
</feature>
<feature type="strand" evidence="11">
    <location>
        <begin position="58"/>
        <end position="60"/>
    </location>
</feature>
<feature type="helix" evidence="11">
    <location>
        <begin position="61"/>
        <end position="70"/>
    </location>
</feature>
<feature type="helix" evidence="11">
    <location>
        <begin position="72"/>
        <end position="76"/>
    </location>
</feature>
<feature type="helix" evidence="11">
    <location>
        <begin position="77"/>
        <end position="79"/>
    </location>
</feature>
<feature type="helix" evidence="11">
    <location>
        <begin position="84"/>
        <end position="91"/>
    </location>
</feature>
<feature type="strand" evidence="11">
    <location>
        <begin position="95"/>
        <end position="102"/>
    </location>
</feature>
<feature type="helix" evidence="11">
    <location>
        <begin position="103"/>
        <end position="112"/>
    </location>
</feature>
<feature type="strand" evidence="12">
    <location>
        <begin position="113"/>
        <end position="115"/>
    </location>
</feature>
<feature type="helix" evidence="11">
    <location>
        <begin position="119"/>
        <end position="126"/>
    </location>
</feature>
<feature type="strand" evidence="11">
    <location>
        <begin position="135"/>
        <end position="138"/>
    </location>
</feature>
<feature type="helix" evidence="11">
    <location>
        <begin position="139"/>
        <end position="147"/>
    </location>
</feature>
<dbReference type="EMBL" id="X97644">
    <property type="protein sequence ID" value="CAA66246.1"/>
    <property type="molecule type" value="Genomic_DNA"/>
</dbReference>
<dbReference type="EMBL" id="Z72628">
    <property type="protein sequence ID" value="CAA96813.1"/>
    <property type="molecule type" value="Genomic_DNA"/>
</dbReference>
<dbReference type="EMBL" id="BK006941">
    <property type="protein sequence ID" value="DAA08001.1"/>
    <property type="molecule type" value="Genomic_DNA"/>
</dbReference>
<dbReference type="PIR" id="S64114">
    <property type="entry name" value="S64114"/>
</dbReference>
<dbReference type="RefSeq" id="NP_011409.1">
    <property type="nucleotide sequence ID" value="NM_001180971.1"/>
</dbReference>
<dbReference type="PDB" id="1M45">
    <property type="method" value="X-ray"/>
    <property type="resolution" value="1.65 A"/>
    <property type="chains" value="A=2-149"/>
</dbReference>
<dbReference type="PDB" id="1M46">
    <property type="method" value="X-ray"/>
    <property type="resolution" value="2.10 A"/>
    <property type="chains" value="A=2-149"/>
</dbReference>
<dbReference type="PDB" id="1N2D">
    <property type="method" value="X-ray"/>
    <property type="resolution" value="2.00 A"/>
    <property type="chains" value="A/B=2-149"/>
</dbReference>
<dbReference type="PDB" id="2FCD">
    <property type="method" value="NMR"/>
    <property type="chains" value="A=2-79"/>
</dbReference>
<dbReference type="PDB" id="2FCE">
    <property type="method" value="NMR"/>
    <property type="chains" value="A=80-149"/>
</dbReference>
<dbReference type="PDBsum" id="1M45"/>
<dbReference type="PDBsum" id="1M46"/>
<dbReference type="PDBsum" id="1N2D"/>
<dbReference type="PDBsum" id="2FCD"/>
<dbReference type="PDBsum" id="2FCE"/>
<dbReference type="BMRB" id="P53141"/>
<dbReference type="SMR" id="P53141"/>
<dbReference type="BioGRID" id="33144">
    <property type="interactions" value="117"/>
</dbReference>
<dbReference type="ComplexPortal" id="CPX-1426">
    <property type="entry name" value="Myosin class II complex"/>
</dbReference>
<dbReference type="ComplexPortal" id="CPX-1501">
    <property type="entry name" value="Myosin class V complex, MYO4 variant"/>
</dbReference>
<dbReference type="ComplexPortal" id="CPX-2225">
    <property type="entry name" value="Myosin class V complex, MYO2 variant"/>
</dbReference>
<dbReference type="ComplexPortal" id="CPX-3503">
    <property type="entry name" value="MIH complex"/>
</dbReference>
<dbReference type="DIP" id="DIP-5576N"/>
<dbReference type="FunCoup" id="P53141">
    <property type="interactions" value="302"/>
</dbReference>
<dbReference type="IntAct" id="P53141">
    <property type="interactions" value="20"/>
</dbReference>
<dbReference type="MINT" id="P53141"/>
<dbReference type="STRING" id="4932.YGL106W"/>
<dbReference type="iPTMnet" id="P53141"/>
<dbReference type="PaxDb" id="4932-YGL106W"/>
<dbReference type="PeptideAtlas" id="P53141"/>
<dbReference type="TopDownProteomics" id="P53141"/>
<dbReference type="EnsemblFungi" id="YGL106W_mRNA">
    <property type="protein sequence ID" value="YGL106W"/>
    <property type="gene ID" value="YGL106W"/>
</dbReference>
<dbReference type="GeneID" id="852772"/>
<dbReference type="KEGG" id="sce:YGL106W"/>
<dbReference type="AGR" id="SGD:S000003074"/>
<dbReference type="SGD" id="S000003074">
    <property type="gene designation" value="MLC1"/>
</dbReference>
<dbReference type="VEuPathDB" id="FungiDB:YGL106W"/>
<dbReference type="eggNOG" id="KOG0027">
    <property type="taxonomic scope" value="Eukaryota"/>
</dbReference>
<dbReference type="GeneTree" id="ENSGT01030000234570"/>
<dbReference type="HOGENOM" id="CLU_061288_13_1_1"/>
<dbReference type="InParanoid" id="P53141"/>
<dbReference type="OMA" id="HDQASTN"/>
<dbReference type="OrthoDB" id="26525at2759"/>
<dbReference type="BioCyc" id="YEAST:G3O-30605-MONOMER"/>
<dbReference type="Reactome" id="R-SCE-5627123">
    <property type="pathway name" value="RHO GTPases activate PAKs"/>
</dbReference>
<dbReference type="BioGRID-ORCS" id="852772">
    <property type="hits" value="5 hits in 10 CRISPR screens"/>
</dbReference>
<dbReference type="EvolutionaryTrace" id="P53141"/>
<dbReference type="PRO" id="PR:P53141"/>
<dbReference type="Proteomes" id="UP000002311">
    <property type="component" value="Chromosome VII"/>
</dbReference>
<dbReference type="RNAct" id="P53141">
    <property type="molecule type" value="protein"/>
</dbReference>
<dbReference type="GO" id="GO:0005935">
    <property type="term" value="C:cellular bud neck"/>
    <property type="evidence" value="ECO:0000314"/>
    <property type="project" value="SGD"/>
</dbReference>
<dbReference type="GO" id="GO:0000142">
    <property type="term" value="C:cellular bud neck contractile ring"/>
    <property type="evidence" value="ECO:0000314"/>
    <property type="project" value="SGD"/>
</dbReference>
<dbReference type="GO" id="GO:0005934">
    <property type="term" value="C:cellular bud tip"/>
    <property type="evidence" value="ECO:0000314"/>
    <property type="project" value="SGD"/>
</dbReference>
<dbReference type="GO" id="GO:0120155">
    <property type="term" value="C:MIH complex"/>
    <property type="evidence" value="ECO:0000314"/>
    <property type="project" value="SGD"/>
</dbReference>
<dbReference type="GO" id="GO:0016460">
    <property type="term" value="C:myosin II complex"/>
    <property type="evidence" value="ECO:0000353"/>
    <property type="project" value="SGD"/>
</dbReference>
<dbReference type="GO" id="GO:0031475">
    <property type="term" value="C:myosin V complex"/>
    <property type="evidence" value="ECO:0000303"/>
    <property type="project" value="ComplexPortal"/>
</dbReference>
<dbReference type="GO" id="GO:0005886">
    <property type="term" value="C:plasma membrane"/>
    <property type="evidence" value="ECO:0000303"/>
    <property type="project" value="ComplexPortal"/>
</dbReference>
<dbReference type="GO" id="GO:0030427">
    <property type="term" value="C:site of polarized growth"/>
    <property type="evidence" value="ECO:0000314"/>
    <property type="project" value="SGD"/>
</dbReference>
<dbReference type="GO" id="GO:0031982">
    <property type="term" value="C:vesicle"/>
    <property type="evidence" value="ECO:0000314"/>
    <property type="project" value="SGD"/>
</dbReference>
<dbReference type="GO" id="GO:0005509">
    <property type="term" value="F:calcium ion binding"/>
    <property type="evidence" value="ECO:0007669"/>
    <property type="project" value="InterPro"/>
</dbReference>
<dbReference type="GO" id="GO:0042802">
    <property type="term" value="F:identical protein binding"/>
    <property type="evidence" value="ECO:0000353"/>
    <property type="project" value="IntAct"/>
</dbReference>
<dbReference type="GO" id="GO:0032038">
    <property type="term" value="F:myosin II heavy chain binding"/>
    <property type="evidence" value="ECO:0000353"/>
    <property type="project" value="SGD"/>
</dbReference>
<dbReference type="GO" id="GO:0031489">
    <property type="term" value="F:myosin V binding"/>
    <property type="evidence" value="ECO:0000314"/>
    <property type="project" value="SGD"/>
</dbReference>
<dbReference type="GO" id="GO:1903475">
    <property type="term" value="P:mitotic actomyosin contractile ring assembly"/>
    <property type="evidence" value="ECO:0000318"/>
    <property type="project" value="GO_Central"/>
</dbReference>
<dbReference type="GO" id="GO:1903476">
    <property type="term" value="P:protein localization to cell division site involved in mitotic actomyosin contractile ring assembly"/>
    <property type="evidence" value="ECO:0000315"/>
    <property type="project" value="SGD"/>
</dbReference>
<dbReference type="GO" id="GO:0031991">
    <property type="term" value="P:regulation of actomyosin contractile ring contraction"/>
    <property type="evidence" value="ECO:0000303"/>
    <property type="project" value="ComplexPortal"/>
</dbReference>
<dbReference type="GO" id="GO:1903338">
    <property type="term" value="P:regulation of cell wall organization or biogenesis"/>
    <property type="evidence" value="ECO:0000303"/>
    <property type="project" value="ComplexPortal"/>
</dbReference>
<dbReference type="GO" id="GO:0032465">
    <property type="term" value="P:regulation of cytokinesis"/>
    <property type="evidence" value="ECO:0000303"/>
    <property type="project" value="ComplexPortal"/>
</dbReference>
<dbReference type="GO" id="GO:0000920">
    <property type="term" value="P:septum digestion after cytokinesis"/>
    <property type="evidence" value="ECO:0000303"/>
    <property type="project" value="ComplexPortal"/>
</dbReference>
<dbReference type="GO" id="GO:0006903">
    <property type="term" value="P:vesicle targeting"/>
    <property type="evidence" value="ECO:0000315"/>
    <property type="project" value="SGD"/>
</dbReference>
<dbReference type="GO" id="GO:0030050">
    <property type="term" value="P:vesicle transport along actin filament"/>
    <property type="evidence" value="ECO:0000303"/>
    <property type="project" value="ComplexPortal"/>
</dbReference>
<dbReference type="CDD" id="cd00051">
    <property type="entry name" value="EFh"/>
    <property type="match status" value="1"/>
</dbReference>
<dbReference type="FunFam" id="1.10.238.10:FF:000082">
    <property type="entry name" value="Myosin light chain 1"/>
    <property type="match status" value="1"/>
</dbReference>
<dbReference type="FunFam" id="1.10.238.10:FF:000387">
    <property type="entry name" value="Myosin light chain 1"/>
    <property type="match status" value="1"/>
</dbReference>
<dbReference type="Gene3D" id="1.10.238.10">
    <property type="entry name" value="EF-hand"/>
    <property type="match status" value="2"/>
</dbReference>
<dbReference type="InterPro" id="IPR050230">
    <property type="entry name" value="CALM/Myosin/TropC-like"/>
</dbReference>
<dbReference type="InterPro" id="IPR011992">
    <property type="entry name" value="EF-hand-dom_pair"/>
</dbReference>
<dbReference type="InterPro" id="IPR002048">
    <property type="entry name" value="EF_hand_dom"/>
</dbReference>
<dbReference type="PANTHER" id="PTHR23048:SF0">
    <property type="entry name" value="CALMODULIN LIKE 3"/>
    <property type="match status" value="1"/>
</dbReference>
<dbReference type="PANTHER" id="PTHR23048">
    <property type="entry name" value="MYOSIN LIGHT CHAIN 1, 3"/>
    <property type="match status" value="1"/>
</dbReference>
<dbReference type="Pfam" id="PF13499">
    <property type="entry name" value="EF-hand_7"/>
    <property type="match status" value="1"/>
</dbReference>
<dbReference type="SMART" id="SM00054">
    <property type="entry name" value="EFh"/>
    <property type="match status" value="3"/>
</dbReference>
<dbReference type="SUPFAM" id="SSF47473">
    <property type="entry name" value="EF-hand"/>
    <property type="match status" value="1"/>
</dbReference>
<dbReference type="PROSITE" id="PS50222">
    <property type="entry name" value="EF_HAND_2"/>
    <property type="match status" value="3"/>
</dbReference>
<reference key="1">
    <citation type="journal article" date="1997" name="Yeast">
        <title>The genes encoding the transcription factor yTAFII60, the G4p1 protein and a putative glucose transporter are contained in a 12.3 kb DNA fragment on the left arm of Saccharomyces cerevisiae chromosome VII.</title>
        <authorList>
            <person name="Paoluzi S."/>
            <person name="Minenkova O."/>
            <person name="Castagnoli L."/>
        </authorList>
    </citation>
    <scope>NUCLEOTIDE SEQUENCE [GENOMIC DNA]</scope>
</reference>
<reference key="2">
    <citation type="journal article" date="1997" name="Nature">
        <title>The nucleotide sequence of Saccharomyces cerevisiae chromosome VII.</title>
        <authorList>
            <person name="Tettelin H."/>
            <person name="Agostoni-Carbone M.L."/>
            <person name="Albermann K."/>
            <person name="Albers M."/>
            <person name="Arroyo J."/>
            <person name="Backes U."/>
            <person name="Barreiros T."/>
            <person name="Bertani I."/>
            <person name="Bjourson A.J."/>
            <person name="Brueckner M."/>
            <person name="Bruschi C.V."/>
            <person name="Carignani G."/>
            <person name="Castagnoli L."/>
            <person name="Cerdan E."/>
            <person name="Clemente M.L."/>
            <person name="Coblenz A."/>
            <person name="Coglievina M."/>
            <person name="Coissac E."/>
            <person name="Defoor E."/>
            <person name="Del Bino S."/>
            <person name="Delius H."/>
            <person name="Delneri D."/>
            <person name="de Wergifosse P."/>
            <person name="Dujon B."/>
            <person name="Durand P."/>
            <person name="Entian K.-D."/>
            <person name="Eraso P."/>
            <person name="Escribano V."/>
            <person name="Fabiani L."/>
            <person name="Fartmann B."/>
            <person name="Feroli F."/>
            <person name="Feuermann M."/>
            <person name="Frontali L."/>
            <person name="Garcia-Gonzalez M."/>
            <person name="Garcia-Saez M.I."/>
            <person name="Goffeau A."/>
            <person name="Guerreiro P."/>
            <person name="Hani J."/>
            <person name="Hansen M."/>
            <person name="Hebling U."/>
            <person name="Hernandez K."/>
            <person name="Heumann K."/>
            <person name="Hilger F."/>
            <person name="Hofmann B."/>
            <person name="Indge K.J."/>
            <person name="James C.M."/>
            <person name="Klima R."/>
            <person name="Koetter P."/>
            <person name="Kramer B."/>
            <person name="Kramer W."/>
            <person name="Lauquin G."/>
            <person name="Leuther H."/>
            <person name="Louis E.J."/>
            <person name="Maillier E."/>
            <person name="Marconi A."/>
            <person name="Martegani E."/>
            <person name="Mazon M.J."/>
            <person name="Mazzoni C."/>
            <person name="McReynolds A.D.K."/>
            <person name="Melchioretto P."/>
            <person name="Mewes H.-W."/>
            <person name="Minenkova O."/>
            <person name="Mueller-Auer S."/>
            <person name="Nawrocki A."/>
            <person name="Netter P."/>
            <person name="Neu R."/>
            <person name="Nombela C."/>
            <person name="Oliver S.G."/>
            <person name="Panzeri L."/>
            <person name="Paoluzi S."/>
            <person name="Plevani P."/>
            <person name="Portetelle D."/>
            <person name="Portillo F."/>
            <person name="Potier S."/>
            <person name="Purnelle B."/>
            <person name="Rieger M."/>
            <person name="Riles L."/>
            <person name="Rinaldi T."/>
            <person name="Robben J."/>
            <person name="Rodrigues-Pousada C."/>
            <person name="Rodriguez-Belmonte E."/>
            <person name="Rodriguez-Torres A.M."/>
            <person name="Rose M."/>
            <person name="Ruzzi M."/>
            <person name="Saliola M."/>
            <person name="Sanchez-Perez M."/>
            <person name="Schaefer B."/>
            <person name="Schaefer M."/>
            <person name="Scharfe M."/>
            <person name="Schmidheini T."/>
            <person name="Schreer A."/>
            <person name="Skala J."/>
            <person name="Souciet J.-L."/>
            <person name="Steensma H.Y."/>
            <person name="Talla E."/>
            <person name="Thierry A."/>
            <person name="Vandenbol M."/>
            <person name="van der Aart Q.J.M."/>
            <person name="Van Dyck L."/>
            <person name="Vanoni M."/>
            <person name="Verhasselt P."/>
            <person name="Voet M."/>
            <person name="Volckaert G."/>
            <person name="Wambutt R."/>
            <person name="Watson M.D."/>
            <person name="Weber N."/>
            <person name="Wedler E."/>
            <person name="Wedler H."/>
            <person name="Wipfli P."/>
            <person name="Wolf K."/>
            <person name="Wright L.F."/>
            <person name="Zaccaria P."/>
            <person name="Zimmermann M."/>
            <person name="Zollner A."/>
            <person name="Kleine K."/>
        </authorList>
    </citation>
    <scope>NUCLEOTIDE SEQUENCE [LARGE SCALE GENOMIC DNA]</scope>
    <source>
        <strain>ATCC 204508 / S288c</strain>
    </source>
</reference>
<reference key="3">
    <citation type="journal article" date="2014" name="G3 (Bethesda)">
        <title>The reference genome sequence of Saccharomyces cerevisiae: Then and now.</title>
        <authorList>
            <person name="Engel S.R."/>
            <person name="Dietrich F.S."/>
            <person name="Fisk D.G."/>
            <person name="Binkley G."/>
            <person name="Balakrishnan R."/>
            <person name="Costanzo M.C."/>
            <person name="Dwight S.S."/>
            <person name="Hitz B.C."/>
            <person name="Karra K."/>
            <person name="Nash R.S."/>
            <person name="Weng S."/>
            <person name="Wong E.D."/>
            <person name="Lloyd P."/>
            <person name="Skrzypek M.S."/>
            <person name="Miyasato S.R."/>
            <person name="Simison M."/>
            <person name="Cherry J.M."/>
        </authorList>
    </citation>
    <scope>GENOME REANNOTATION</scope>
    <source>
        <strain>ATCC 204508 / S288c</strain>
    </source>
</reference>
<reference key="4">
    <citation type="journal article" date="1998" name="J. Cell Biol.">
        <title>Mlc1p is a light chain for the unconventional myosin Myo2p in Saccharomyces cerevisiae.</title>
        <authorList>
            <person name="Stevens R.C."/>
            <person name="Davis T.N."/>
        </authorList>
    </citation>
    <scope>FUNCTION</scope>
    <scope>INTERACTION WITH MYO2</scope>
</reference>
<reference key="5">
    <citation type="journal article" date="2000" name="Curr. Biol.">
        <title>A myosin light chain mediates the localization of the budding yeast IQGAP-like protein during contractile ring formation.</title>
        <authorList>
            <person name="Shannon K.B."/>
            <person name="Li R."/>
        </authorList>
    </citation>
    <scope>SUBCELLULAR LOCATION</scope>
    <scope>INTERACTION WITH IQG1</scope>
</reference>
<reference key="6">
    <citation type="journal article" date="2000" name="J. Cell Sci.">
        <title>Yeast myosin light chain, Mlc1p, interacts with both IQGAP and class II myosin to effect cytokinesis.</title>
        <authorList>
            <person name="Boyne J.R."/>
            <person name="Yosuf H.M."/>
            <person name="Bieganowski P."/>
            <person name="Brenner C."/>
            <person name="Price C."/>
        </authorList>
    </citation>
    <scope>SUBCELLULAR LOCATION</scope>
    <scope>INTERACTION WITH IQG1 AND MYO1</scope>
</reference>
<reference key="7">
    <citation type="journal article" date="2002" name="EMBO J.">
        <title>Mlc1p promotes septum closure during cytokinesis via the IQ motifs of the vesicle motor Myo2p.</title>
        <authorList>
            <person name="Wagner W."/>
            <person name="Bielli P."/>
            <person name="Wacha S."/>
            <person name="Ragnini-Wilson A."/>
        </authorList>
    </citation>
    <scope>FUNCTION</scope>
    <scope>INTERACTION WITH MYO2 AND SEC4</scope>
    <scope>MUTAGENESIS OF PHE-93 AND PHE-142</scope>
</reference>
<reference key="8">
    <citation type="journal article" date="2004" name="J. Cell Biol.">
        <title>Identification and functional analysis of the essential and regulatory light chains of the only type II myosin Myo1p in Saccharomyces cerevisiae.</title>
        <authorList>
            <person name="Luo J."/>
            <person name="Vallen E.A."/>
            <person name="Dravis C."/>
            <person name="Tcheperegine S.E."/>
            <person name="Drees B."/>
            <person name="Bi E."/>
        </authorList>
    </citation>
    <scope>FUNCTION</scope>
    <scope>INTERACTION WITH MYO1</scope>
    <scope>MUTAGENESIS OF GLY-114 AND GLY-135</scope>
</reference>
<reference key="9">
    <citation type="journal article" date="2012" name="Proteomics">
        <title>Sites of ubiquitin attachment in Saccharomyces cerevisiae.</title>
        <authorList>
            <person name="Starita L.M."/>
            <person name="Lo R.S."/>
            <person name="Eng J.K."/>
            <person name="von Haller P.D."/>
            <person name="Fields S."/>
        </authorList>
    </citation>
    <scope>UBIQUITINATION [LARGE SCALE ANALYSIS] AT LYS-116</scope>
    <scope>IDENTIFICATION BY MASS SPECTROMETRY [LARGE SCALE ANALYSIS]</scope>
</reference>
<reference key="10">
    <citation type="journal article" date="2002" name="Acta Crystallogr. D">
        <title>Crystallization, X-ray characterization and selenomethionine phasing of Mlc1p bound to IQ motifs from myosin V.</title>
        <authorList>
            <person name="Terrak M."/>
            <person name="Otterbein L.R."/>
            <person name="Wu G."/>
            <person name="Palecanda L.A."/>
            <person name="Lu R.C."/>
            <person name="Dominguez R."/>
        </authorList>
    </citation>
    <scope>X-RAY CRYSTALLOGRAPHY (1.65 ANGSTROMS) OF 2-149 IN COMPLEX WITH MYO2</scope>
</reference>
<reference key="11">
    <citation type="journal article" date="2003" name="EMBO J.">
        <title>Two distinct myosin light chain structures are induced by specific variations within the bound IQ motifs-functional implications.</title>
        <authorList>
            <person name="Terrak M."/>
            <person name="Wu G."/>
            <person name="Stafford W.F."/>
            <person name="Lu R.C."/>
            <person name="Dominguez R."/>
        </authorList>
    </citation>
    <scope>X-RAY CRYSTALLOGRAPHY (1.65 ANGSTROMS) OF 2-149 IN COMPLEX WITH MYO2</scope>
</reference>
<keyword id="KW-0002">3D-structure</keyword>
<keyword id="KW-0106">Calcium</keyword>
<keyword id="KW-0131">Cell cycle</keyword>
<keyword id="KW-0132">Cell division</keyword>
<keyword id="KW-1017">Isopeptide bond</keyword>
<keyword id="KW-0479">Metal-binding</keyword>
<keyword id="KW-0505">Motor protein</keyword>
<keyword id="KW-0518">Myosin</keyword>
<keyword id="KW-1185">Reference proteome</keyword>
<keyword id="KW-0677">Repeat</keyword>
<keyword id="KW-0832">Ubl conjugation</keyword>